<organism>
    <name type="scientific">Streptococcus agalactiae serotype Ia (strain ATCC 27591 / A909 / CDC SS700)</name>
    <dbReference type="NCBI Taxonomy" id="205921"/>
    <lineage>
        <taxon>Bacteria</taxon>
        <taxon>Bacillati</taxon>
        <taxon>Bacillota</taxon>
        <taxon>Bacilli</taxon>
        <taxon>Lactobacillales</taxon>
        <taxon>Streptococcaceae</taxon>
        <taxon>Streptococcus</taxon>
    </lineage>
</organism>
<evidence type="ECO:0000255" key="1">
    <source>
        <dbReference type="HAMAP-Rule" id="MF_01815"/>
    </source>
</evidence>
<sequence>MVFAKISQLAHYAPSQIIKNEDLSLIMDTSDDWISSRTGIKQRHISKNETTADLANKVAEQLIEKSGYSASQIDFIIVATMTPDSMMPSTAARVQAHIGASNAFAFDLSAACSGFVFALSTAEKLISSGSYQKGLVIGAETVSKVLDWTDRGTAVLFGDGAGGVLLEASKEKHFLAESLNTDGSRQGLQSSQVGLNSPFSDEVLDDKFLKMDGRAIFDFAIKEVSKSINHLIETSYLEKEDIDYLFLHQANRRILDKMSRKIDIARDKFPENMMDYGNTSAASIPILLSESYENGLLKLDGNQTILLSGFGGGLTWGSLIVKI</sequence>
<name>FABH_STRA1</name>
<comment type="function">
    <text evidence="1">Catalyzes the condensation reaction of fatty acid synthesis by the addition to an acyl acceptor of two carbons from malonyl-ACP. Catalyzes the first condensation reaction which initiates fatty acid synthesis and may therefore play a role in governing the total rate of fatty acid production. Possesses both acetoacetyl-ACP synthase and acetyl transacylase activities. Its substrate specificity determines the biosynthesis of branched-chain and/or straight-chain of fatty acids.</text>
</comment>
<comment type="catalytic activity">
    <reaction evidence="1">
        <text>malonyl-[ACP] + acetyl-CoA + H(+) = 3-oxobutanoyl-[ACP] + CO2 + CoA</text>
        <dbReference type="Rhea" id="RHEA:12080"/>
        <dbReference type="Rhea" id="RHEA-COMP:9623"/>
        <dbReference type="Rhea" id="RHEA-COMP:9625"/>
        <dbReference type="ChEBI" id="CHEBI:15378"/>
        <dbReference type="ChEBI" id="CHEBI:16526"/>
        <dbReference type="ChEBI" id="CHEBI:57287"/>
        <dbReference type="ChEBI" id="CHEBI:57288"/>
        <dbReference type="ChEBI" id="CHEBI:78449"/>
        <dbReference type="ChEBI" id="CHEBI:78450"/>
        <dbReference type="EC" id="2.3.1.180"/>
    </reaction>
</comment>
<comment type="pathway">
    <text evidence="1">Lipid metabolism; fatty acid biosynthesis.</text>
</comment>
<comment type="subunit">
    <text evidence="1">Homodimer.</text>
</comment>
<comment type="subcellular location">
    <subcellularLocation>
        <location evidence="1">Cytoplasm</location>
    </subcellularLocation>
</comment>
<comment type="domain">
    <text evidence="1">The last Arg residue of the ACP-binding site is essential for the weak association between ACP/AcpP and FabH.</text>
</comment>
<comment type="similarity">
    <text evidence="1">Belongs to the thiolase-like superfamily. FabH family.</text>
</comment>
<gene>
    <name evidence="1" type="primary">fabH</name>
    <name type="ordered locus">SAK_0418</name>
</gene>
<reference key="1">
    <citation type="journal article" date="2005" name="Proc. Natl. Acad. Sci. U.S.A.">
        <title>Genome analysis of multiple pathogenic isolates of Streptococcus agalactiae: implications for the microbial 'pan-genome'.</title>
        <authorList>
            <person name="Tettelin H."/>
            <person name="Masignani V."/>
            <person name="Cieslewicz M.J."/>
            <person name="Donati C."/>
            <person name="Medini D."/>
            <person name="Ward N.L."/>
            <person name="Angiuoli S.V."/>
            <person name="Crabtree J."/>
            <person name="Jones A.L."/>
            <person name="Durkin A.S."/>
            <person name="DeBoy R.T."/>
            <person name="Davidsen T.M."/>
            <person name="Mora M."/>
            <person name="Scarselli M."/>
            <person name="Margarit y Ros I."/>
            <person name="Peterson J.D."/>
            <person name="Hauser C.R."/>
            <person name="Sundaram J.P."/>
            <person name="Nelson W.C."/>
            <person name="Madupu R."/>
            <person name="Brinkac L.M."/>
            <person name="Dodson R.J."/>
            <person name="Rosovitz M.J."/>
            <person name="Sullivan S.A."/>
            <person name="Daugherty S.C."/>
            <person name="Haft D.H."/>
            <person name="Selengut J."/>
            <person name="Gwinn M.L."/>
            <person name="Zhou L."/>
            <person name="Zafar N."/>
            <person name="Khouri H."/>
            <person name="Radune D."/>
            <person name="Dimitrov G."/>
            <person name="Watkins K."/>
            <person name="O'Connor K.J."/>
            <person name="Smith S."/>
            <person name="Utterback T.R."/>
            <person name="White O."/>
            <person name="Rubens C.E."/>
            <person name="Grandi G."/>
            <person name="Madoff L.C."/>
            <person name="Kasper D.L."/>
            <person name="Telford J.L."/>
            <person name="Wessels M.R."/>
            <person name="Rappuoli R."/>
            <person name="Fraser C.M."/>
        </authorList>
    </citation>
    <scope>NUCLEOTIDE SEQUENCE [LARGE SCALE GENOMIC DNA]</scope>
    <source>
        <strain>ATCC 27591 / A909 / CDC SS700</strain>
    </source>
</reference>
<feature type="chain" id="PRO_1000056418" description="Beta-ketoacyl-[acyl-carrier-protein] synthase III">
    <location>
        <begin position="1"/>
        <end position="323"/>
    </location>
</feature>
<feature type="region of interest" description="ACP-binding" evidence="1">
    <location>
        <begin position="249"/>
        <end position="253"/>
    </location>
</feature>
<feature type="active site" evidence="1">
    <location>
        <position position="112"/>
    </location>
</feature>
<feature type="active site" evidence="1">
    <location>
        <position position="248"/>
    </location>
</feature>
<feature type="active site" evidence="1">
    <location>
        <position position="278"/>
    </location>
</feature>
<accession>Q3K338</accession>
<protein>
    <recommendedName>
        <fullName evidence="1">Beta-ketoacyl-[acyl-carrier-protein] synthase III</fullName>
        <shortName evidence="1">Beta-ketoacyl-ACP synthase III</shortName>
        <shortName evidence="1">KAS III</shortName>
        <ecNumber evidence="1">2.3.1.180</ecNumber>
    </recommendedName>
    <alternativeName>
        <fullName evidence="1">3-oxoacyl-[acyl-carrier-protein] synthase 3</fullName>
    </alternativeName>
    <alternativeName>
        <fullName evidence="1">3-oxoacyl-[acyl-carrier-protein] synthase III</fullName>
    </alternativeName>
</protein>
<keyword id="KW-0012">Acyltransferase</keyword>
<keyword id="KW-0963">Cytoplasm</keyword>
<keyword id="KW-0275">Fatty acid biosynthesis</keyword>
<keyword id="KW-0276">Fatty acid metabolism</keyword>
<keyword id="KW-0444">Lipid biosynthesis</keyword>
<keyword id="KW-0443">Lipid metabolism</keyword>
<keyword id="KW-0511">Multifunctional enzyme</keyword>
<keyword id="KW-0808">Transferase</keyword>
<proteinExistence type="inferred from homology"/>
<dbReference type="EC" id="2.3.1.180" evidence="1"/>
<dbReference type="EMBL" id="CP000114">
    <property type="protein sequence ID" value="ABA45442.1"/>
    <property type="molecule type" value="Genomic_DNA"/>
</dbReference>
<dbReference type="RefSeq" id="WP_000230695.1">
    <property type="nucleotide sequence ID" value="NC_007432.1"/>
</dbReference>
<dbReference type="SMR" id="Q3K338"/>
<dbReference type="KEGG" id="sak:SAK_0418"/>
<dbReference type="HOGENOM" id="CLU_039592_4_1_9"/>
<dbReference type="UniPathway" id="UPA00094"/>
<dbReference type="GO" id="GO:0005737">
    <property type="term" value="C:cytoplasm"/>
    <property type="evidence" value="ECO:0007669"/>
    <property type="project" value="UniProtKB-SubCell"/>
</dbReference>
<dbReference type="GO" id="GO:0004315">
    <property type="term" value="F:3-oxoacyl-[acyl-carrier-protein] synthase activity"/>
    <property type="evidence" value="ECO:0007669"/>
    <property type="project" value="InterPro"/>
</dbReference>
<dbReference type="GO" id="GO:0033818">
    <property type="term" value="F:beta-ketoacyl-acyl-carrier-protein synthase III activity"/>
    <property type="evidence" value="ECO:0007669"/>
    <property type="project" value="UniProtKB-UniRule"/>
</dbReference>
<dbReference type="GO" id="GO:0006633">
    <property type="term" value="P:fatty acid biosynthetic process"/>
    <property type="evidence" value="ECO:0007669"/>
    <property type="project" value="UniProtKB-UniRule"/>
</dbReference>
<dbReference type="CDD" id="cd00830">
    <property type="entry name" value="KAS_III"/>
    <property type="match status" value="1"/>
</dbReference>
<dbReference type="Gene3D" id="3.40.47.10">
    <property type="match status" value="1"/>
</dbReference>
<dbReference type="HAMAP" id="MF_01815">
    <property type="entry name" value="FabH"/>
    <property type="match status" value="1"/>
</dbReference>
<dbReference type="InterPro" id="IPR013747">
    <property type="entry name" value="ACP_syn_III_C"/>
</dbReference>
<dbReference type="InterPro" id="IPR013751">
    <property type="entry name" value="ACP_syn_III_N"/>
</dbReference>
<dbReference type="InterPro" id="IPR004655">
    <property type="entry name" value="FabH"/>
</dbReference>
<dbReference type="InterPro" id="IPR016039">
    <property type="entry name" value="Thiolase-like"/>
</dbReference>
<dbReference type="NCBIfam" id="TIGR00747">
    <property type="entry name" value="fabH"/>
    <property type="match status" value="1"/>
</dbReference>
<dbReference type="NCBIfam" id="NF006829">
    <property type="entry name" value="PRK09352.1"/>
    <property type="match status" value="1"/>
</dbReference>
<dbReference type="PANTHER" id="PTHR43091">
    <property type="entry name" value="3-OXOACYL-[ACYL-CARRIER-PROTEIN] SYNTHASE"/>
    <property type="match status" value="1"/>
</dbReference>
<dbReference type="PANTHER" id="PTHR43091:SF1">
    <property type="entry name" value="BETA-KETOACYL-[ACYL-CARRIER-PROTEIN] SYNTHASE III, CHLOROPLASTIC"/>
    <property type="match status" value="1"/>
</dbReference>
<dbReference type="Pfam" id="PF08545">
    <property type="entry name" value="ACP_syn_III"/>
    <property type="match status" value="1"/>
</dbReference>
<dbReference type="Pfam" id="PF08541">
    <property type="entry name" value="ACP_syn_III_C"/>
    <property type="match status" value="1"/>
</dbReference>
<dbReference type="SUPFAM" id="SSF53901">
    <property type="entry name" value="Thiolase-like"/>
    <property type="match status" value="1"/>
</dbReference>